<protein>
    <recommendedName>
        <fullName>Polyadenylate-binding protein-interacting protein 9</fullName>
        <shortName>PABP-interacting protein 9</shortName>
        <shortName>Poly(A)-binding protein-interacting protein 9</shortName>
    </recommendedName>
    <alternativeName>
        <fullName>PAM2-containing protein CID9</fullName>
    </alternativeName>
    <alternativeName>
        <fullName>Protein CTC-INTERACTING DOMAIN 9</fullName>
    </alternativeName>
</protein>
<comment type="subcellular location">
    <subcellularLocation>
        <location evidence="4">Nucleus</location>
    </subcellularLocation>
</comment>
<comment type="domain">
    <text>Contains a PAM2-like motif, which seems to be involved in the binding to the PABC/CTC domain of PAB proteins.</text>
</comment>
<name>CID9_ARATH</name>
<dbReference type="EMBL" id="AB028617">
    <property type="protein sequence ID" value="BAB01337.1"/>
    <property type="molecule type" value="Genomic_DNA"/>
</dbReference>
<dbReference type="EMBL" id="CP002686">
    <property type="protein sequence ID" value="AEE75527.1"/>
    <property type="molecule type" value="Genomic_DNA"/>
</dbReference>
<dbReference type="RefSeq" id="NP_188063.1">
    <property type="nucleotide sequence ID" value="NM_112305.2"/>
</dbReference>
<dbReference type="SMR" id="Q9LRR6"/>
<dbReference type="FunCoup" id="Q9LRR6">
    <property type="interactions" value="1"/>
</dbReference>
<dbReference type="STRING" id="3702.Q9LRR6"/>
<dbReference type="PaxDb" id="3702-AT3G14450.1"/>
<dbReference type="ProteomicsDB" id="246943"/>
<dbReference type="EnsemblPlants" id="AT3G14450.1">
    <property type="protein sequence ID" value="AT3G14450.1"/>
    <property type="gene ID" value="AT3G14450"/>
</dbReference>
<dbReference type="GeneID" id="820668"/>
<dbReference type="Gramene" id="AT3G14450.1">
    <property type="protein sequence ID" value="AT3G14450.1"/>
    <property type="gene ID" value="AT3G14450"/>
</dbReference>
<dbReference type="KEGG" id="ath:AT3G14450"/>
<dbReference type="Araport" id="AT3G14450"/>
<dbReference type="TAIR" id="AT3G14450">
    <property type="gene designation" value="CID9"/>
</dbReference>
<dbReference type="eggNOG" id="KOG0118">
    <property type="taxonomic scope" value="Eukaryota"/>
</dbReference>
<dbReference type="HOGENOM" id="CLU_042473_0_0_1"/>
<dbReference type="InParanoid" id="Q9LRR6"/>
<dbReference type="OMA" id="ENFANNR"/>
<dbReference type="PhylomeDB" id="Q9LRR6"/>
<dbReference type="PRO" id="PR:Q9LRR6"/>
<dbReference type="Proteomes" id="UP000006548">
    <property type="component" value="Chromosome 3"/>
</dbReference>
<dbReference type="ExpressionAtlas" id="Q9LRR6">
    <property type="expression patterns" value="baseline and differential"/>
</dbReference>
<dbReference type="GO" id="GO:0005634">
    <property type="term" value="C:nucleus"/>
    <property type="evidence" value="ECO:0007669"/>
    <property type="project" value="UniProtKB-SubCell"/>
</dbReference>
<dbReference type="GO" id="GO:0003723">
    <property type="term" value="F:RNA binding"/>
    <property type="evidence" value="ECO:0007669"/>
    <property type="project" value="UniProtKB-KW"/>
</dbReference>
<dbReference type="CDD" id="cd12459">
    <property type="entry name" value="RRM1_CID8_like"/>
    <property type="match status" value="1"/>
</dbReference>
<dbReference type="CDD" id="cd12460">
    <property type="entry name" value="RRM2_CID8_like"/>
    <property type="match status" value="1"/>
</dbReference>
<dbReference type="FunFam" id="3.30.70.330:FF:000665">
    <property type="entry name" value="Polyadenylate-binding protein-interacting protein 10"/>
    <property type="match status" value="1"/>
</dbReference>
<dbReference type="FunFam" id="3.30.70.330:FF:000530">
    <property type="entry name" value="Polyadenylate-binding protein-interacting protein 11"/>
    <property type="match status" value="1"/>
</dbReference>
<dbReference type="Gene3D" id="3.30.70.330">
    <property type="match status" value="2"/>
</dbReference>
<dbReference type="InterPro" id="IPR034823">
    <property type="entry name" value="CID8-like_RRM1"/>
</dbReference>
<dbReference type="InterPro" id="IPR034825">
    <property type="entry name" value="CID8-like_RRM2"/>
</dbReference>
<dbReference type="InterPro" id="IPR012677">
    <property type="entry name" value="Nucleotide-bd_a/b_plait_sf"/>
</dbReference>
<dbReference type="InterPro" id="IPR009818">
    <property type="entry name" value="PAM2_motif"/>
</dbReference>
<dbReference type="InterPro" id="IPR035979">
    <property type="entry name" value="RBD_domain_sf"/>
</dbReference>
<dbReference type="InterPro" id="IPR000504">
    <property type="entry name" value="RRM_dom"/>
</dbReference>
<dbReference type="PANTHER" id="PTHR32343:SF22">
    <property type="entry name" value="LD29830P"/>
    <property type="match status" value="1"/>
</dbReference>
<dbReference type="PANTHER" id="PTHR32343">
    <property type="entry name" value="SERINE/ARGININE-RICH SPLICING FACTOR"/>
    <property type="match status" value="1"/>
</dbReference>
<dbReference type="Pfam" id="PF07145">
    <property type="entry name" value="PAM2"/>
    <property type="match status" value="1"/>
</dbReference>
<dbReference type="Pfam" id="PF00076">
    <property type="entry name" value="RRM_1"/>
    <property type="match status" value="2"/>
</dbReference>
<dbReference type="SMART" id="SM00360">
    <property type="entry name" value="RRM"/>
    <property type="match status" value="2"/>
</dbReference>
<dbReference type="SUPFAM" id="SSF54928">
    <property type="entry name" value="RNA-binding domain, RBD"/>
    <property type="match status" value="2"/>
</dbReference>
<dbReference type="PROSITE" id="PS50102">
    <property type="entry name" value="RRM"/>
    <property type="match status" value="2"/>
</dbReference>
<proteinExistence type="predicted"/>
<reference key="1">
    <citation type="journal article" date="2000" name="DNA Res.">
        <title>Structural analysis of Arabidopsis thaliana chromosome 3. I. Sequence features of the regions of 4,504,864 bp covered by sixty P1 and TAC clones.</title>
        <authorList>
            <person name="Sato S."/>
            <person name="Nakamura Y."/>
            <person name="Kaneko T."/>
            <person name="Katoh T."/>
            <person name="Asamizu E."/>
            <person name="Tabata S."/>
        </authorList>
    </citation>
    <scope>NUCLEOTIDE SEQUENCE [LARGE SCALE GENOMIC DNA]</scope>
    <source>
        <strain>cv. Columbia</strain>
    </source>
</reference>
<reference key="2">
    <citation type="journal article" date="2017" name="Plant J.">
        <title>Araport11: a complete reannotation of the Arabidopsis thaliana reference genome.</title>
        <authorList>
            <person name="Cheng C.Y."/>
            <person name="Krishnakumar V."/>
            <person name="Chan A.P."/>
            <person name="Thibaud-Nissen F."/>
            <person name="Schobel S."/>
            <person name="Town C.D."/>
        </authorList>
    </citation>
    <scope>GENOME REANNOTATION</scope>
    <source>
        <strain>cv. Columbia</strain>
    </source>
</reference>
<reference key="3">
    <citation type="journal article" date="2005" name="Mol. Genet. Genomics">
        <title>Four distinct classes of proteins as interaction partners of the PABC domain of Arabidopsis thaliana Poly(A)-binding proteins.</title>
        <authorList>
            <person name="Bravo J."/>
            <person name="Aguilar-Henonin L."/>
            <person name="Olmedo G."/>
            <person name="Guzman P."/>
        </authorList>
    </citation>
    <scope>GENE FAMILY</scope>
    <scope>PAM2 MOTIF</scope>
</reference>
<feature type="chain" id="PRO_0000428899" description="Polyadenylate-binding protein-interacting protein 9">
    <location>
        <begin position="1"/>
        <end position="327"/>
    </location>
</feature>
<feature type="domain" description="RRM 1" evidence="2">
    <location>
        <begin position="141"/>
        <end position="216"/>
    </location>
</feature>
<feature type="domain" description="RRM 2" evidence="2">
    <location>
        <begin position="238"/>
        <end position="314"/>
    </location>
</feature>
<feature type="region of interest" description="Disordered" evidence="3">
    <location>
        <begin position="97"/>
        <end position="132"/>
    </location>
</feature>
<feature type="region of interest" description="Disordered" evidence="3">
    <location>
        <begin position="308"/>
        <end position="327"/>
    </location>
</feature>
<feature type="short sequence motif" description="PAM2-like">
    <location>
        <begin position="59"/>
        <end position="69"/>
    </location>
</feature>
<feature type="short sequence motif" description="Bipartite nuclear localization signal" evidence="1">
    <location>
        <begin position="114"/>
        <end position="125"/>
    </location>
</feature>
<feature type="compositionally biased region" description="Basic and acidic residues" evidence="3">
    <location>
        <begin position="97"/>
        <end position="113"/>
    </location>
</feature>
<feature type="compositionally biased region" description="Basic residues" evidence="3">
    <location>
        <begin position="114"/>
        <end position="127"/>
    </location>
</feature>
<evidence type="ECO:0000255" key="1"/>
<evidence type="ECO:0000255" key="2">
    <source>
        <dbReference type="PROSITE-ProRule" id="PRU00176"/>
    </source>
</evidence>
<evidence type="ECO:0000256" key="3">
    <source>
        <dbReference type="SAM" id="MobiDB-lite"/>
    </source>
</evidence>
<evidence type="ECO:0000305" key="4"/>
<sequence length="327" mass="36546">MATVTEMPTDVVVVDDVKEVSTKSEKIIDEGIEKSSITDSKTETESRLDMHKLVAMFKKLNPLAKEFFPSYYDPKKNNQVAKANQFLPADDFETTKKQSGEEFDLDAKKDDNTRKRRNYSQGRRRLTGRISKAQREDSIRRTVYVSDIDQSVTEEGLAGLFSNCGQVVDCRICGDPHSVLRFAFVEFADDQGAHEALSLGGTMLGFYPVRVLPSKTAILPVNPTFLPRSEDEREMCTRTIYCTNIDKKVSQADVRNFFESACGEVTRLRLLGDQLHSTRIAFVEFALADSALSALNCSGMVVGSQPIRVSPSKTPVRPRITRPPSTN</sequence>
<keyword id="KW-0539">Nucleus</keyword>
<keyword id="KW-1185">Reference proteome</keyword>
<keyword id="KW-0677">Repeat</keyword>
<keyword id="KW-0694">RNA-binding</keyword>
<organism>
    <name type="scientific">Arabidopsis thaliana</name>
    <name type="common">Mouse-ear cress</name>
    <dbReference type="NCBI Taxonomy" id="3702"/>
    <lineage>
        <taxon>Eukaryota</taxon>
        <taxon>Viridiplantae</taxon>
        <taxon>Streptophyta</taxon>
        <taxon>Embryophyta</taxon>
        <taxon>Tracheophyta</taxon>
        <taxon>Spermatophyta</taxon>
        <taxon>Magnoliopsida</taxon>
        <taxon>eudicotyledons</taxon>
        <taxon>Gunneridae</taxon>
        <taxon>Pentapetalae</taxon>
        <taxon>rosids</taxon>
        <taxon>malvids</taxon>
        <taxon>Brassicales</taxon>
        <taxon>Brassicaceae</taxon>
        <taxon>Camelineae</taxon>
        <taxon>Arabidopsis</taxon>
    </lineage>
</organism>
<gene>
    <name type="primary">CID9</name>
    <name type="ordered locus">At3g14450</name>
    <name type="ORF">MOA2.5</name>
</gene>
<accession>Q9LRR6</accession>